<name>PHS_PROM2</name>
<comment type="catalytic activity">
    <reaction evidence="1">
        <text>(4aS,6R)-4a-hydroxy-L-erythro-5,6,7,8-tetrahydrobiopterin = (6R)-L-erythro-6,7-dihydrobiopterin + H2O</text>
        <dbReference type="Rhea" id="RHEA:11920"/>
        <dbReference type="ChEBI" id="CHEBI:15377"/>
        <dbReference type="ChEBI" id="CHEBI:15642"/>
        <dbReference type="ChEBI" id="CHEBI:43120"/>
        <dbReference type="EC" id="4.2.1.96"/>
    </reaction>
</comment>
<comment type="similarity">
    <text evidence="1">Belongs to the pterin-4-alpha-carbinolamine dehydratase family.</text>
</comment>
<keyword id="KW-0456">Lyase</keyword>
<protein>
    <recommendedName>
        <fullName evidence="1">Putative pterin-4-alpha-carbinolamine dehydratase</fullName>
        <shortName evidence="1">PHS</shortName>
        <ecNumber evidence="1">4.2.1.96</ecNumber>
    </recommendedName>
    <alternativeName>
        <fullName evidence="1">4-alpha-hydroxy-tetrahydropterin dehydratase</fullName>
    </alternativeName>
    <alternativeName>
        <fullName evidence="1">Pterin carbinolamine dehydratase</fullName>
        <shortName evidence="1">PCD</shortName>
    </alternativeName>
</protein>
<gene>
    <name type="ordered locus">P9215_05731</name>
</gene>
<feature type="chain" id="PRO_1000060223" description="Putative pterin-4-alpha-carbinolamine dehydratase">
    <location>
        <begin position="1"/>
        <end position="96"/>
    </location>
</feature>
<proteinExistence type="inferred from homology"/>
<evidence type="ECO:0000255" key="1">
    <source>
        <dbReference type="HAMAP-Rule" id="MF_00434"/>
    </source>
</evidence>
<sequence>MEPYILQDEELNELVVKIPGWEIKSKQIQREFNFANFNEAFAFMTKVALICEKYNHHPNWENVYAKVIIKLNTHDLGGITNLDQTLASEINKIFDQ</sequence>
<reference key="1">
    <citation type="journal article" date="2007" name="PLoS Genet.">
        <title>Patterns and implications of gene gain and loss in the evolution of Prochlorococcus.</title>
        <authorList>
            <person name="Kettler G.C."/>
            <person name="Martiny A.C."/>
            <person name="Huang K."/>
            <person name="Zucker J."/>
            <person name="Coleman M.L."/>
            <person name="Rodrigue S."/>
            <person name="Chen F."/>
            <person name="Lapidus A."/>
            <person name="Ferriera S."/>
            <person name="Johnson J."/>
            <person name="Steglich C."/>
            <person name="Church G.M."/>
            <person name="Richardson P."/>
            <person name="Chisholm S.W."/>
        </authorList>
    </citation>
    <scope>NUCLEOTIDE SEQUENCE [LARGE SCALE GENOMIC DNA]</scope>
    <source>
        <strain>MIT 9215</strain>
    </source>
</reference>
<organism>
    <name type="scientific">Prochlorococcus marinus (strain MIT 9215)</name>
    <dbReference type="NCBI Taxonomy" id="93060"/>
    <lineage>
        <taxon>Bacteria</taxon>
        <taxon>Bacillati</taxon>
        <taxon>Cyanobacteriota</taxon>
        <taxon>Cyanophyceae</taxon>
        <taxon>Synechococcales</taxon>
        <taxon>Prochlorococcaceae</taxon>
        <taxon>Prochlorococcus</taxon>
    </lineage>
</organism>
<accession>A8G3K7</accession>
<dbReference type="EC" id="4.2.1.96" evidence="1"/>
<dbReference type="EMBL" id="CP000825">
    <property type="protein sequence ID" value="ABV50188.1"/>
    <property type="molecule type" value="Genomic_DNA"/>
</dbReference>
<dbReference type="RefSeq" id="WP_012007315.1">
    <property type="nucleotide sequence ID" value="NC_009840.1"/>
</dbReference>
<dbReference type="SMR" id="A8G3K7"/>
<dbReference type="STRING" id="93060.P9215_05731"/>
<dbReference type="KEGG" id="pmh:P9215_05731"/>
<dbReference type="eggNOG" id="COG2154">
    <property type="taxonomic scope" value="Bacteria"/>
</dbReference>
<dbReference type="HOGENOM" id="CLU_081974_3_2_3"/>
<dbReference type="OrthoDB" id="9794987at2"/>
<dbReference type="Proteomes" id="UP000002014">
    <property type="component" value="Chromosome"/>
</dbReference>
<dbReference type="GO" id="GO:0008124">
    <property type="term" value="F:4-alpha-hydroxytetrahydrobiopterin dehydratase activity"/>
    <property type="evidence" value="ECO:0007669"/>
    <property type="project" value="UniProtKB-UniRule"/>
</dbReference>
<dbReference type="GO" id="GO:0006729">
    <property type="term" value="P:tetrahydrobiopterin biosynthetic process"/>
    <property type="evidence" value="ECO:0007669"/>
    <property type="project" value="InterPro"/>
</dbReference>
<dbReference type="CDD" id="cd00914">
    <property type="entry name" value="PCD_DCoH_subfamily_b"/>
    <property type="match status" value="1"/>
</dbReference>
<dbReference type="Gene3D" id="3.30.1360.20">
    <property type="entry name" value="Transcriptional coactivator/pterin dehydratase"/>
    <property type="match status" value="1"/>
</dbReference>
<dbReference type="HAMAP" id="MF_00434">
    <property type="entry name" value="Pterin_4_alpha"/>
    <property type="match status" value="1"/>
</dbReference>
<dbReference type="InterPro" id="IPR036428">
    <property type="entry name" value="PCD_sf"/>
</dbReference>
<dbReference type="InterPro" id="IPR001533">
    <property type="entry name" value="Pterin_deHydtase"/>
</dbReference>
<dbReference type="NCBIfam" id="NF002017">
    <property type="entry name" value="PRK00823.1-2"/>
    <property type="match status" value="1"/>
</dbReference>
<dbReference type="NCBIfam" id="NF002018">
    <property type="entry name" value="PRK00823.1-3"/>
    <property type="match status" value="1"/>
</dbReference>
<dbReference type="PANTHER" id="PTHR12599">
    <property type="entry name" value="PTERIN-4-ALPHA-CARBINOLAMINE DEHYDRATASE"/>
    <property type="match status" value="1"/>
</dbReference>
<dbReference type="PANTHER" id="PTHR12599:SF0">
    <property type="entry name" value="PTERIN-4-ALPHA-CARBINOLAMINE DEHYDRATASE"/>
    <property type="match status" value="1"/>
</dbReference>
<dbReference type="Pfam" id="PF01329">
    <property type="entry name" value="Pterin_4a"/>
    <property type="match status" value="1"/>
</dbReference>
<dbReference type="SUPFAM" id="SSF55248">
    <property type="entry name" value="PCD-like"/>
    <property type="match status" value="1"/>
</dbReference>